<organism>
    <name type="scientific">Campylobacter jejuni subsp. doylei (strain ATCC BAA-1458 / RM4099 / 269.97)</name>
    <dbReference type="NCBI Taxonomy" id="360109"/>
    <lineage>
        <taxon>Bacteria</taxon>
        <taxon>Pseudomonadati</taxon>
        <taxon>Campylobacterota</taxon>
        <taxon>Epsilonproteobacteria</taxon>
        <taxon>Campylobacterales</taxon>
        <taxon>Campylobacteraceae</taxon>
        <taxon>Campylobacter</taxon>
    </lineage>
</organism>
<keyword id="KW-0963">Cytoplasm</keyword>
<keyword id="KW-0694">RNA-binding</keyword>
<protein>
    <recommendedName>
        <fullName evidence="1">SsrA-binding protein</fullName>
    </recommendedName>
    <alternativeName>
        <fullName evidence="1">Small protein B</fullName>
    </alternativeName>
</protein>
<proteinExistence type="inferred from homology"/>
<evidence type="ECO:0000255" key="1">
    <source>
        <dbReference type="HAMAP-Rule" id="MF_00023"/>
    </source>
</evidence>
<reference key="1">
    <citation type="submission" date="2007-07" db="EMBL/GenBank/DDBJ databases">
        <title>Complete genome sequence of Campylobacter jejuni subsp doylei 269.97 isolated from human blood.</title>
        <authorList>
            <person name="Fouts D.E."/>
            <person name="Mongodin E.F."/>
            <person name="Puiu D."/>
            <person name="Sebastian Y."/>
            <person name="Miller W.G."/>
            <person name="Mandrell R.E."/>
            <person name="Lastovica A.J."/>
            <person name="Nelson K.E."/>
        </authorList>
    </citation>
    <scope>NUCLEOTIDE SEQUENCE [LARGE SCALE GENOMIC DNA]</scope>
    <source>
        <strain>ATCC BAA-1458 / RM4099 / 269.97</strain>
    </source>
</reference>
<feature type="chain" id="PRO_1000002025" description="SsrA-binding protein">
    <location>
        <begin position="1"/>
        <end position="150"/>
    </location>
</feature>
<gene>
    <name evidence="1" type="primary">smpB</name>
    <name type="ordered locus">JJD26997_0617</name>
</gene>
<name>SSRP_CAMJD</name>
<comment type="function">
    <text evidence="1">Required for rescue of stalled ribosomes mediated by trans-translation. Binds to transfer-messenger RNA (tmRNA), required for stable association of tmRNA with ribosomes. tmRNA and SmpB together mimic tRNA shape, replacing the anticodon stem-loop with SmpB. tmRNA is encoded by the ssrA gene; the 2 termini fold to resemble tRNA(Ala) and it encodes a 'tag peptide', a short internal open reading frame. During trans-translation Ala-aminoacylated tmRNA acts like a tRNA, entering the A-site of stalled ribosomes, displacing the stalled mRNA. The ribosome then switches to translate the ORF on the tmRNA; the nascent peptide is terminated with the 'tag peptide' encoded by the tmRNA and targeted for degradation. The ribosome is freed to recommence translation, which seems to be the essential function of trans-translation.</text>
</comment>
<comment type="subcellular location">
    <subcellularLocation>
        <location evidence="1">Cytoplasm</location>
    </subcellularLocation>
    <text evidence="1">The tmRNA-SmpB complex associates with stalled 70S ribosomes.</text>
</comment>
<comment type="similarity">
    <text evidence="1">Belongs to the SmpB family.</text>
</comment>
<dbReference type="EMBL" id="CP000768">
    <property type="protein sequence ID" value="ABS44487.1"/>
    <property type="molecule type" value="Genomic_DNA"/>
</dbReference>
<dbReference type="SMR" id="A7H2Q2"/>
<dbReference type="KEGG" id="cjd:JJD26997_0617"/>
<dbReference type="HOGENOM" id="CLU_108953_3_1_7"/>
<dbReference type="Proteomes" id="UP000002302">
    <property type="component" value="Chromosome"/>
</dbReference>
<dbReference type="GO" id="GO:0005829">
    <property type="term" value="C:cytosol"/>
    <property type="evidence" value="ECO:0007669"/>
    <property type="project" value="TreeGrafter"/>
</dbReference>
<dbReference type="GO" id="GO:0003723">
    <property type="term" value="F:RNA binding"/>
    <property type="evidence" value="ECO:0007669"/>
    <property type="project" value="UniProtKB-UniRule"/>
</dbReference>
<dbReference type="GO" id="GO:0070929">
    <property type="term" value="P:trans-translation"/>
    <property type="evidence" value="ECO:0007669"/>
    <property type="project" value="UniProtKB-UniRule"/>
</dbReference>
<dbReference type="CDD" id="cd09294">
    <property type="entry name" value="SmpB"/>
    <property type="match status" value="1"/>
</dbReference>
<dbReference type="Gene3D" id="2.40.280.10">
    <property type="match status" value="1"/>
</dbReference>
<dbReference type="HAMAP" id="MF_00023">
    <property type="entry name" value="SmpB"/>
    <property type="match status" value="1"/>
</dbReference>
<dbReference type="InterPro" id="IPR023620">
    <property type="entry name" value="SmpB"/>
</dbReference>
<dbReference type="InterPro" id="IPR000037">
    <property type="entry name" value="SsrA-bd_prot"/>
</dbReference>
<dbReference type="NCBIfam" id="NF003843">
    <property type="entry name" value="PRK05422.1"/>
    <property type="match status" value="1"/>
</dbReference>
<dbReference type="NCBIfam" id="TIGR00086">
    <property type="entry name" value="smpB"/>
    <property type="match status" value="1"/>
</dbReference>
<dbReference type="PANTHER" id="PTHR30308:SF2">
    <property type="entry name" value="SSRA-BINDING PROTEIN"/>
    <property type="match status" value="1"/>
</dbReference>
<dbReference type="PANTHER" id="PTHR30308">
    <property type="entry name" value="TMRNA-BINDING COMPONENT OF TRANS-TRANSLATION TAGGING COMPLEX"/>
    <property type="match status" value="1"/>
</dbReference>
<dbReference type="Pfam" id="PF01668">
    <property type="entry name" value="SmpB"/>
    <property type="match status" value="1"/>
</dbReference>
<dbReference type="SUPFAM" id="SSF74982">
    <property type="entry name" value="Small protein B (SmpB)"/>
    <property type="match status" value="1"/>
</dbReference>
<sequence length="150" mass="17193">MKIIARNKKALFDYSIIERFEAGIVLKGSEVVALRAGRANLKDSFVRIIKSEIFLLNSHISLLHTTHSFYKHEERGARKLLMHRKQIDKLLGKVSIEGYTIVALDLYFNTKNKVKATLALAKGKNLHDKRETLKKKQADLEARAAMKNYK</sequence>
<accession>A7H2Q2</accession>